<keyword id="KW-0002">3D-structure</keyword>
<keyword id="KW-0121">Carboxypeptidase</keyword>
<keyword id="KW-1003">Cell membrane</keyword>
<keyword id="KW-0903">Direct protein sequencing</keyword>
<keyword id="KW-0325">Glycoprotein</keyword>
<keyword id="KW-0336">GPI-anchor</keyword>
<keyword id="KW-0378">Hydrolase</keyword>
<keyword id="KW-0449">Lipoprotein</keyword>
<keyword id="KW-0472">Membrane</keyword>
<keyword id="KW-0479">Metal-binding</keyword>
<keyword id="KW-0482">Metalloprotease</keyword>
<keyword id="KW-0645">Protease</keyword>
<keyword id="KW-1267">Proteomics identification</keyword>
<keyword id="KW-1185">Reference proteome</keyword>
<keyword id="KW-0732">Signal</keyword>
<keyword id="KW-0862">Zinc</keyword>
<organism>
    <name type="scientific">Homo sapiens</name>
    <name type="common">Human</name>
    <dbReference type="NCBI Taxonomy" id="9606"/>
    <lineage>
        <taxon>Eukaryota</taxon>
        <taxon>Metazoa</taxon>
        <taxon>Chordata</taxon>
        <taxon>Craniata</taxon>
        <taxon>Vertebrata</taxon>
        <taxon>Euteleostomi</taxon>
        <taxon>Mammalia</taxon>
        <taxon>Eutheria</taxon>
        <taxon>Euarchontoglires</taxon>
        <taxon>Primates</taxon>
        <taxon>Haplorrhini</taxon>
        <taxon>Catarrhini</taxon>
        <taxon>Hominidae</taxon>
        <taxon>Homo</taxon>
    </lineage>
</organism>
<evidence type="ECO:0000250" key="1">
    <source>
        <dbReference type="UniProtKB" id="P00730"/>
    </source>
</evidence>
<evidence type="ECO:0000255" key="2"/>
<evidence type="ECO:0000255" key="3">
    <source>
        <dbReference type="PROSITE-ProRule" id="PRU01379"/>
    </source>
</evidence>
<evidence type="ECO:0000269" key="4">
    <source>
    </source>
</evidence>
<evidence type="ECO:0000269" key="5">
    <source>
    </source>
</evidence>
<evidence type="ECO:0000269" key="6">
    <source>
    </source>
</evidence>
<evidence type="ECO:0000305" key="7"/>
<evidence type="ECO:0000312" key="8">
    <source>
        <dbReference type="HGNC" id="HGNC:21011"/>
    </source>
</evidence>
<evidence type="ECO:0007829" key="9">
    <source>
        <dbReference type="PDB" id="5MRV"/>
    </source>
</evidence>
<sequence length="374" mass="42529">MKPLLETLYLLGMLVPGGLGYDRSLAQHRQEIVDKSVSPWSLETYSYNIYHPMGEIYEWMREISEKYKEVVTQHFLGVTYETHPMYYLKISQPSGNPKKIIWMDCGIHAREWIAPAFCQWFVKEILQNHKDNSSIRKLLRNLDFYVLPVLNIDGYIYTWTTDRLWRKSRSPHNNGTCFGTDLNRNFNASWCSIGASRNCQDQTFCGTGPVSEPETKAVASFIESKKDDILCFLTMHSYGQLILTPYGYTKNKSSNHPEMIQVGQKAANALKAKYGTNYRVGSSADILYASSGSSRDWARDIGIPFSYTFELRDSGTYGFVLPEAQIQPTCEETMEAVLSVLDDVYAKHWHSDSAGRVTSATMLLGLLVSCMSLL</sequence>
<gene>
    <name evidence="8" type="primary">CPO</name>
</gene>
<proteinExistence type="evidence at protein level"/>
<reference key="1">
    <citation type="submission" date="2001-12" db="EMBL/GenBank/DDBJ databases">
        <title>A new Zn-carboxypeptidase highly expressed in ovary.</title>
        <authorList>
            <person name="Obaya A.J."/>
            <person name="Lopez-Otin C."/>
        </authorList>
    </citation>
    <scope>NUCLEOTIDE SEQUENCE [MRNA]</scope>
    <source>
        <tissue>Ovary</tissue>
    </source>
</reference>
<reference key="2">
    <citation type="journal article" date="2005" name="Nature">
        <title>Generation and annotation of the DNA sequences of human chromosomes 2 and 4.</title>
        <authorList>
            <person name="Hillier L.W."/>
            <person name="Graves T.A."/>
            <person name="Fulton R.S."/>
            <person name="Fulton L.A."/>
            <person name="Pepin K.H."/>
            <person name="Minx P."/>
            <person name="Wagner-McPherson C."/>
            <person name="Layman D."/>
            <person name="Wylie K."/>
            <person name="Sekhon M."/>
            <person name="Becker M.C."/>
            <person name="Fewell G.A."/>
            <person name="Delehaunty K.D."/>
            <person name="Miner T.L."/>
            <person name="Nash W.E."/>
            <person name="Kremitzki C."/>
            <person name="Oddy L."/>
            <person name="Du H."/>
            <person name="Sun H."/>
            <person name="Bradshaw-Cordum H."/>
            <person name="Ali J."/>
            <person name="Carter J."/>
            <person name="Cordes M."/>
            <person name="Harris A."/>
            <person name="Isak A."/>
            <person name="van Brunt A."/>
            <person name="Nguyen C."/>
            <person name="Du F."/>
            <person name="Courtney L."/>
            <person name="Kalicki J."/>
            <person name="Ozersky P."/>
            <person name="Abbott S."/>
            <person name="Armstrong J."/>
            <person name="Belter E.A."/>
            <person name="Caruso L."/>
            <person name="Cedroni M."/>
            <person name="Cotton M."/>
            <person name="Davidson T."/>
            <person name="Desai A."/>
            <person name="Elliott G."/>
            <person name="Erb T."/>
            <person name="Fronick C."/>
            <person name="Gaige T."/>
            <person name="Haakenson W."/>
            <person name="Haglund K."/>
            <person name="Holmes A."/>
            <person name="Harkins R."/>
            <person name="Kim K."/>
            <person name="Kruchowski S.S."/>
            <person name="Strong C.M."/>
            <person name="Grewal N."/>
            <person name="Goyea E."/>
            <person name="Hou S."/>
            <person name="Levy A."/>
            <person name="Martinka S."/>
            <person name="Mead K."/>
            <person name="McLellan M.D."/>
            <person name="Meyer R."/>
            <person name="Randall-Maher J."/>
            <person name="Tomlinson C."/>
            <person name="Dauphin-Kohlberg S."/>
            <person name="Kozlowicz-Reilly A."/>
            <person name="Shah N."/>
            <person name="Swearengen-Shahid S."/>
            <person name="Snider J."/>
            <person name="Strong J.T."/>
            <person name="Thompson J."/>
            <person name="Yoakum M."/>
            <person name="Leonard S."/>
            <person name="Pearman C."/>
            <person name="Trani L."/>
            <person name="Radionenko M."/>
            <person name="Waligorski J.E."/>
            <person name="Wang C."/>
            <person name="Rock S.M."/>
            <person name="Tin-Wollam A.-M."/>
            <person name="Maupin R."/>
            <person name="Latreille P."/>
            <person name="Wendl M.C."/>
            <person name="Yang S.-P."/>
            <person name="Pohl C."/>
            <person name="Wallis J.W."/>
            <person name="Spieth J."/>
            <person name="Bieri T.A."/>
            <person name="Berkowicz N."/>
            <person name="Nelson J.O."/>
            <person name="Osborne J."/>
            <person name="Ding L."/>
            <person name="Meyer R."/>
            <person name="Sabo A."/>
            <person name="Shotland Y."/>
            <person name="Sinha P."/>
            <person name="Wohldmann P.E."/>
            <person name="Cook L.L."/>
            <person name="Hickenbotham M.T."/>
            <person name="Eldred J."/>
            <person name="Williams D."/>
            <person name="Jones T.A."/>
            <person name="She X."/>
            <person name="Ciccarelli F.D."/>
            <person name="Izaurralde E."/>
            <person name="Taylor J."/>
            <person name="Schmutz J."/>
            <person name="Myers R.M."/>
            <person name="Cox D.R."/>
            <person name="Huang X."/>
            <person name="McPherson J.D."/>
            <person name="Mardis E.R."/>
            <person name="Clifton S.W."/>
            <person name="Warren W.C."/>
            <person name="Chinwalla A.T."/>
            <person name="Eddy S.R."/>
            <person name="Marra M.A."/>
            <person name="Ovcharenko I."/>
            <person name="Furey T.S."/>
            <person name="Miller W."/>
            <person name="Eichler E.E."/>
            <person name="Bork P."/>
            <person name="Suyama M."/>
            <person name="Torrents D."/>
            <person name="Waterston R.H."/>
            <person name="Wilson R.K."/>
        </authorList>
    </citation>
    <scope>NUCLEOTIDE SEQUENCE [LARGE SCALE GENOMIC DNA]</scope>
</reference>
<reference key="3">
    <citation type="journal article" date="2004" name="Genome Res.">
        <title>The status, quality, and expansion of the NIH full-length cDNA project: the Mammalian Gene Collection (MGC).</title>
        <authorList>
            <consortium name="The MGC Project Team"/>
        </authorList>
    </citation>
    <scope>NUCLEOTIDE SEQUENCE [LARGE SCALE MRNA]</scope>
    <scope>VARIANTS ILE-85 AND ARG-134</scope>
</reference>
<reference key="4">
    <citation type="journal article" date="2002" name="J. Biol. Chem.">
        <title>Identification and characterization of three members of the human metallocarboxypeptidase gene family.</title>
        <authorList>
            <person name="Wei S."/>
            <person name="Segura S."/>
            <person name="Vendrell J."/>
            <person name="Aviles F.X."/>
            <person name="Lanoue E."/>
            <person name="Day R."/>
            <person name="Feng Y."/>
            <person name="Fricker L.D."/>
        </authorList>
    </citation>
    <scope>IDENTIFICATION</scope>
</reference>
<reference key="5">
    <citation type="journal article" date="2011" name="J. Biol. Chem.">
        <title>Carboxypeptidase O is a glycosylphosphatidylinositol-anchored intestinal peptidase with acidic amino acid specificity.</title>
        <authorList>
            <person name="Lyons P.J."/>
            <person name="Fricker L.D."/>
        </authorList>
    </citation>
    <scope>PROTEIN SEQUENCE OF 21-25</scope>
    <scope>FUNCTION</scope>
    <scope>ACTIVITY REGULATION</scope>
    <scope>BIOPHYSICOCHEMICAL PROPERTIES</scope>
    <scope>SUBCELLULAR LOCATION</scope>
    <scope>TISSUE SPECIFICITY</scope>
    <scope>GLYCOSYLATION</scope>
</reference>
<reference key="6">
    <citation type="journal article" date="2006" name="Science">
        <title>The consensus coding sequences of human breast and colorectal cancers.</title>
        <authorList>
            <person name="Sjoeblom T."/>
            <person name="Jones S."/>
            <person name="Wood L.D."/>
            <person name="Parsons D.W."/>
            <person name="Lin J."/>
            <person name="Barber T.D."/>
            <person name="Mandelker D."/>
            <person name="Leary R.J."/>
            <person name="Ptak J."/>
            <person name="Silliman N."/>
            <person name="Szabo S."/>
            <person name="Buckhaults P."/>
            <person name="Farrell C."/>
            <person name="Meeh P."/>
            <person name="Markowitz S.D."/>
            <person name="Willis J."/>
            <person name="Dawson D."/>
            <person name="Willson J.K.V."/>
            <person name="Gazdar A.F."/>
            <person name="Hartigan J."/>
            <person name="Wu L."/>
            <person name="Liu C."/>
            <person name="Parmigiani G."/>
            <person name="Park B.H."/>
            <person name="Bachman K.E."/>
            <person name="Papadopoulos N."/>
            <person name="Vogelstein B."/>
            <person name="Kinzler K.W."/>
            <person name="Velculescu V.E."/>
        </authorList>
    </citation>
    <scope>VARIANT [LARGE SCALE ANALYSIS] ASN-273</scope>
</reference>
<accession>Q8IVL8</accession>
<accession>Q2M277</accession>
<accession>Q7RTW7</accession>
<name>CBPO_HUMAN</name>
<feature type="signal peptide" evidence="6">
    <location>
        <begin position="1"/>
        <end position="20"/>
    </location>
</feature>
<feature type="chain" id="PRO_0000252401" description="Carboxypeptidase O" evidence="7">
    <location>
        <begin position="21"/>
        <end position="352"/>
    </location>
</feature>
<feature type="propeptide" id="PRO_0000437881" description="Removed in mature form" evidence="7">
    <location>
        <begin position="353"/>
        <end position="374"/>
    </location>
</feature>
<feature type="domain" description="Peptidase M14" evidence="3">
    <location>
        <begin position="49"/>
        <end position="344"/>
    </location>
</feature>
<feature type="active site" description="Proton donor/acceptor" evidence="3">
    <location>
        <position position="310"/>
    </location>
</feature>
<feature type="binding site" evidence="3">
    <location>
        <position position="108"/>
    </location>
    <ligand>
        <name>Zn(2+)</name>
        <dbReference type="ChEBI" id="CHEBI:29105"/>
        <note>catalytic</note>
    </ligand>
</feature>
<feature type="binding site" evidence="3">
    <location>
        <position position="111"/>
    </location>
    <ligand>
        <name>Zn(2+)</name>
        <dbReference type="ChEBI" id="CHEBI:29105"/>
        <note>catalytic</note>
    </ligand>
</feature>
<feature type="binding site" evidence="3">
    <location>
        <position position="236"/>
    </location>
    <ligand>
        <name>Zn(2+)</name>
        <dbReference type="ChEBI" id="CHEBI:29105"/>
        <note>catalytic</note>
    </ligand>
</feature>
<feature type="lipid moiety-binding region" description="GPI-anchor amidated aspartate" evidence="2">
    <location>
        <position position="352"/>
    </location>
</feature>
<feature type="glycosylation site" description="N-linked (GlcNAc...) asparagine" evidence="2">
    <location>
        <position position="132"/>
    </location>
</feature>
<feature type="glycosylation site" description="N-linked (GlcNAc...) asparagine" evidence="2">
    <location>
        <position position="174"/>
    </location>
</feature>
<feature type="glycosylation site" description="N-linked (GlcNAc...) asparagine" evidence="2">
    <location>
        <position position="187"/>
    </location>
</feature>
<feature type="glycosylation site" description="N-linked (GlcNAc...) asparagine" evidence="2">
    <location>
        <position position="251"/>
    </location>
</feature>
<feature type="sequence variant" id="VAR_027850" description="In dbSNP:rs13420911." evidence="4">
    <original>M</original>
    <variation>I</variation>
    <location>
        <position position="85"/>
    </location>
</feature>
<feature type="sequence variant" id="VAR_027851" description="In dbSNP:rs11903403." evidence="4">
    <original>S</original>
    <variation>R</variation>
    <location>
        <position position="134"/>
    </location>
</feature>
<feature type="sequence variant" id="VAR_036012" description="In a colorectal cancer sample; somatic mutation; dbSNP:rs896000260." evidence="5">
    <original>K</original>
    <variation>N</variation>
    <location>
        <position position="273"/>
    </location>
</feature>
<feature type="helix" evidence="9">
    <location>
        <begin position="53"/>
        <end position="66"/>
    </location>
</feature>
<feature type="turn" evidence="9">
    <location>
        <begin position="67"/>
        <end position="70"/>
    </location>
</feature>
<feature type="strand" evidence="9">
    <location>
        <begin position="71"/>
        <end position="78"/>
    </location>
</feature>
<feature type="strand" evidence="9">
    <location>
        <begin position="84"/>
        <end position="90"/>
    </location>
</feature>
<feature type="strand" evidence="9">
    <location>
        <begin position="99"/>
        <end position="105"/>
    </location>
</feature>
<feature type="helix" evidence="9">
    <location>
        <begin position="113"/>
        <end position="128"/>
    </location>
</feature>
<feature type="turn" evidence="9">
    <location>
        <begin position="129"/>
        <end position="131"/>
    </location>
</feature>
<feature type="helix" evidence="9">
    <location>
        <begin position="133"/>
        <end position="141"/>
    </location>
</feature>
<feature type="strand" evidence="9">
    <location>
        <begin position="142"/>
        <end position="148"/>
    </location>
</feature>
<feature type="helix" evidence="9">
    <location>
        <begin position="152"/>
        <end position="160"/>
    </location>
</feature>
<feature type="turn" evidence="9">
    <location>
        <begin position="173"/>
        <end position="176"/>
    </location>
</feature>
<feature type="helix" evidence="9">
    <location>
        <begin position="182"/>
        <end position="184"/>
    </location>
</feature>
<feature type="strand" evidence="9">
    <location>
        <begin position="186"/>
        <end position="189"/>
    </location>
</feature>
<feature type="strand" evidence="9">
    <location>
        <begin position="192"/>
        <end position="194"/>
    </location>
</feature>
<feature type="helix" evidence="9">
    <location>
        <begin position="213"/>
        <end position="225"/>
    </location>
</feature>
<feature type="helix" evidence="9">
    <location>
        <begin position="226"/>
        <end position="228"/>
    </location>
</feature>
<feature type="strand" evidence="9">
    <location>
        <begin position="229"/>
        <end position="236"/>
    </location>
</feature>
<feature type="strand" evidence="9">
    <location>
        <begin position="241"/>
        <end position="245"/>
    </location>
</feature>
<feature type="helix" evidence="9">
    <location>
        <begin position="256"/>
        <end position="274"/>
    </location>
</feature>
<feature type="strand" evidence="9">
    <location>
        <begin position="279"/>
        <end position="282"/>
    </location>
</feature>
<feature type="helix" evidence="9">
    <location>
        <begin position="283"/>
        <end position="286"/>
    </location>
</feature>
<feature type="helix" evidence="9">
    <location>
        <begin position="294"/>
        <end position="300"/>
    </location>
</feature>
<feature type="strand" evidence="9">
    <location>
        <begin position="304"/>
        <end position="310"/>
    </location>
</feature>
<feature type="strand" evidence="9">
    <location>
        <begin position="314"/>
        <end position="317"/>
    </location>
</feature>
<feature type="helix" evidence="9">
    <location>
        <begin position="323"/>
        <end position="325"/>
    </location>
</feature>
<feature type="helix" evidence="9">
    <location>
        <begin position="326"/>
        <end position="346"/>
    </location>
</feature>
<comment type="function">
    <text evidence="6">Carboxypeptidase which preferentially cleaves C-terminal acidic residues from peptides and proteins. Can also cleave C-terminal hydrophobic amino acids, with a preference for small residues over large residues.</text>
</comment>
<comment type="cofactor">
    <cofactor evidence="1">
        <name>Zn(2+)</name>
        <dbReference type="ChEBI" id="CHEBI:29105"/>
    </cofactor>
</comment>
<comment type="activity regulation">
    <text evidence="6">Strongly inhibited by potato carboxypeptidase inhibitor, and the chelating agents EDTA and 1,10-phenanthroline. Also inhibited by compounds with multiple carboxylic acid groups such as citrate and succinate, and to a lesser exent the amino acids aspartate and glutamate. Not significantly inhibited by benzylsuccinic acid.</text>
</comment>
<comment type="biophysicochemical properties">
    <kinetics>
        <KM evidence="6">325 uM for 3-(2-furyl)acryloyl-Glu-Glu (at pH 7.5)</KM>
        <KM evidence="6">284 uM for 3-(2-furyl)acryloyl-Phe-Phe (at pH 7.5)</KM>
        <KM evidence="6">549 uM for 3-(2-furyl)acryloyl-Phe-Ala (at pH 7.5)</KM>
        <KM evidence="6">614 uM for 3-(2-furyl)acryloyl-Lys-Ala (at pH 7.5)</KM>
    </kinetics>
</comment>
<comment type="subcellular location">
    <subcellularLocation>
        <location evidence="6">Apical cell membrane</location>
        <topology evidence="6">Lipid-anchor</topology>
        <topology evidence="6">GPI-anchor</topology>
    </subcellularLocation>
</comment>
<comment type="tissue specificity">
    <text evidence="6">Detected in enterocytes of the ileum.</text>
</comment>
<comment type="PTM">
    <text evidence="6">N-glycosylated.</text>
</comment>
<comment type="similarity">
    <text evidence="7">Belongs to the peptidase M14 family.</text>
</comment>
<dbReference type="EC" id="3.4.17.-" evidence="6"/>
<dbReference type="EMBL" id="AJ422118">
    <property type="protein sequence ID" value="CAD19478.1"/>
    <property type="molecule type" value="mRNA"/>
</dbReference>
<dbReference type="EMBL" id="AC019052">
    <property type="protein sequence ID" value="AAX93277.1"/>
    <property type="molecule type" value="Genomic_DNA"/>
</dbReference>
<dbReference type="EMBL" id="BC112076">
    <property type="protein sequence ID" value="AAI12077.1"/>
    <property type="molecule type" value="mRNA"/>
</dbReference>
<dbReference type="EMBL" id="BC112078">
    <property type="protein sequence ID" value="AAI12079.1"/>
    <property type="molecule type" value="mRNA"/>
</dbReference>
<dbReference type="EMBL" id="BK000189">
    <property type="protein sequence ID" value="DAA00036.1"/>
    <property type="molecule type" value="mRNA"/>
</dbReference>
<dbReference type="CCDS" id="CCDS2372.1"/>
<dbReference type="RefSeq" id="NP_775100.1">
    <property type="nucleotide sequence ID" value="NM_173077.3"/>
</dbReference>
<dbReference type="RefSeq" id="XP_016858861.1">
    <property type="nucleotide sequence ID" value="XM_017003372.1"/>
</dbReference>
<dbReference type="RefSeq" id="XP_054196562.1">
    <property type="nucleotide sequence ID" value="XM_054340587.1"/>
</dbReference>
<dbReference type="PDB" id="5MRV">
    <property type="method" value="X-ray"/>
    <property type="resolution" value="1.85 A"/>
    <property type="chains" value="A/B=21-349"/>
</dbReference>
<dbReference type="PDBsum" id="5MRV"/>
<dbReference type="SMR" id="Q8IVL8"/>
<dbReference type="FunCoup" id="Q8IVL8">
    <property type="interactions" value="9"/>
</dbReference>
<dbReference type="STRING" id="9606.ENSP00000272852"/>
<dbReference type="MEROPS" id="M14.021"/>
<dbReference type="GlyCosmos" id="Q8IVL8">
    <property type="glycosylation" value="4 sites, No reported glycans"/>
</dbReference>
<dbReference type="GlyGen" id="Q8IVL8">
    <property type="glycosylation" value="4 sites"/>
</dbReference>
<dbReference type="iPTMnet" id="Q8IVL8"/>
<dbReference type="PhosphoSitePlus" id="Q8IVL8"/>
<dbReference type="BioMuta" id="CPO"/>
<dbReference type="DMDM" id="74723635"/>
<dbReference type="MassIVE" id="Q8IVL8"/>
<dbReference type="PaxDb" id="9606-ENSP00000272852"/>
<dbReference type="PeptideAtlas" id="Q8IVL8"/>
<dbReference type="ProteomicsDB" id="70740"/>
<dbReference type="Antibodypedia" id="52118">
    <property type="antibodies" value="186 antibodies from 21 providers"/>
</dbReference>
<dbReference type="DNASU" id="130749"/>
<dbReference type="Ensembl" id="ENST00000272852.4">
    <property type="protein sequence ID" value="ENSP00000272852.2"/>
    <property type="gene ID" value="ENSG00000144410.5"/>
</dbReference>
<dbReference type="GeneID" id="130749"/>
<dbReference type="KEGG" id="hsa:130749"/>
<dbReference type="MANE-Select" id="ENST00000272852.4">
    <property type="protein sequence ID" value="ENSP00000272852.2"/>
    <property type="RefSeq nucleotide sequence ID" value="NM_173077.3"/>
    <property type="RefSeq protein sequence ID" value="NP_775100.1"/>
</dbReference>
<dbReference type="UCSC" id="uc002vby.2">
    <property type="organism name" value="human"/>
</dbReference>
<dbReference type="AGR" id="HGNC:21011"/>
<dbReference type="CTD" id="130749"/>
<dbReference type="DisGeNET" id="130749"/>
<dbReference type="GeneCards" id="CPO"/>
<dbReference type="HGNC" id="HGNC:21011">
    <property type="gene designation" value="CPO"/>
</dbReference>
<dbReference type="HPA" id="ENSG00000144410">
    <property type="expression patterns" value="Tissue enriched (intestine)"/>
</dbReference>
<dbReference type="MIM" id="609563">
    <property type="type" value="gene"/>
</dbReference>
<dbReference type="neXtProt" id="NX_Q8IVL8"/>
<dbReference type="OpenTargets" id="ENSG00000144410"/>
<dbReference type="PharmGKB" id="PA164741367"/>
<dbReference type="VEuPathDB" id="HostDB:ENSG00000144410"/>
<dbReference type="eggNOG" id="KOG2650">
    <property type="taxonomic scope" value="Eukaryota"/>
</dbReference>
<dbReference type="GeneTree" id="ENSGT00940000161508"/>
<dbReference type="HOGENOM" id="CLU_019326_4_1_1"/>
<dbReference type="InParanoid" id="Q8IVL8"/>
<dbReference type="OMA" id="EEQWAGQ"/>
<dbReference type="OrthoDB" id="3626597at2759"/>
<dbReference type="PAN-GO" id="Q8IVL8">
    <property type="GO annotations" value="3 GO annotations based on evolutionary models"/>
</dbReference>
<dbReference type="PhylomeDB" id="Q8IVL8"/>
<dbReference type="TreeFam" id="TF317197"/>
<dbReference type="PathwayCommons" id="Q8IVL8"/>
<dbReference type="BioGRID-ORCS" id="130749">
    <property type="hits" value="10 hits in 1153 CRISPR screens"/>
</dbReference>
<dbReference type="ChiTaRS" id="CPO">
    <property type="organism name" value="human"/>
</dbReference>
<dbReference type="GenomeRNAi" id="130749"/>
<dbReference type="Pharos" id="Q8IVL8">
    <property type="development level" value="Tdark"/>
</dbReference>
<dbReference type="PRO" id="PR:Q8IVL8"/>
<dbReference type="Proteomes" id="UP000005640">
    <property type="component" value="Chromosome 2"/>
</dbReference>
<dbReference type="RNAct" id="Q8IVL8">
    <property type="molecule type" value="protein"/>
</dbReference>
<dbReference type="Bgee" id="ENSG00000144410">
    <property type="expression patterns" value="Expressed in small intestine Peyer's patch and 91 other cell types or tissues"/>
</dbReference>
<dbReference type="GO" id="GO:0016324">
    <property type="term" value="C:apical plasma membrane"/>
    <property type="evidence" value="ECO:0007669"/>
    <property type="project" value="UniProtKB-SubCell"/>
</dbReference>
<dbReference type="GO" id="GO:0005615">
    <property type="term" value="C:extracellular space"/>
    <property type="evidence" value="ECO:0000318"/>
    <property type="project" value="GO_Central"/>
</dbReference>
<dbReference type="GO" id="GO:0005886">
    <property type="term" value="C:plasma membrane"/>
    <property type="evidence" value="ECO:0000314"/>
    <property type="project" value="UniProtKB"/>
</dbReference>
<dbReference type="GO" id="GO:0098552">
    <property type="term" value="C:side of membrane"/>
    <property type="evidence" value="ECO:0007669"/>
    <property type="project" value="UniProtKB-KW"/>
</dbReference>
<dbReference type="GO" id="GO:0004181">
    <property type="term" value="F:metallocarboxypeptidase activity"/>
    <property type="evidence" value="ECO:0000314"/>
    <property type="project" value="UniProtKB"/>
</dbReference>
<dbReference type="GO" id="GO:0008270">
    <property type="term" value="F:zinc ion binding"/>
    <property type="evidence" value="ECO:0007669"/>
    <property type="project" value="InterPro"/>
</dbReference>
<dbReference type="GO" id="GO:0006508">
    <property type="term" value="P:proteolysis"/>
    <property type="evidence" value="ECO:0000318"/>
    <property type="project" value="GO_Central"/>
</dbReference>
<dbReference type="CDD" id="cd06247">
    <property type="entry name" value="M14_CPO"/>
    <property type="match status" value="1"/>
</dbReference>
<dbReference type="FunFam" id="3.40.630.10:FF:000050">
    <property type="entry name" value="Carboxypeptidase O"/>
    <property type="match status" value="1"/>
</dbReference>
<dbReference type="Gene3D" id="3.40.630.10">
    <property type="entry name" value="Zn peptidases"/>
    <property type="match status" value="1"/>
</dbReference>
<dbReference type="InterPro" id="IPR033850">
    <property type="entry name" value="Carboxypeptidase_O"/>
</dbReference>
<dbReference type="InterPro" id="IPR000834">
    <property type="entry name" value="Peptidase_M14"/>
</dbReference>
<dbReference type="PANTHER" id="PTHR11705:SF19">
    <property type="entry name" value="CARBOXYPEPTIDASE O"/>
    <property type="match status" value="1"/>
</dbReference>
<dbReference type="PANTHER" id="PTHR11705">
    <property type="entry name" value="PROTEASE FAMILY M14 CARBOXYPEPTIDASE A,B"/>
    <property type="match status" value="1"/>
</dbReference>
<dbReference type="Pfam" id="PF00246">
    <property type="entry name" value="Peptidase_M14"/>
    <property type="match status" value="1"/>
</dbReference>
<dbReference type="PRINTS" id="PR00765">
    <property type="entry name" value="CRBOXYPTASEA"/>
</dbReference>
<dbReference type="SMART" id="SM00631">
    <property type="entry name" value="Zn_pept"/>
    <property type="match status" value="1"/>
</dbReference>
<dbReference type="SUPFAM" id="SSF53187">
    <property type="entry name" value="Zn-dependent exopeptidases"/>
    <property type="match status" value="1"/>
</dbReference>
<dbReference type="PROSITE" id="PS00132">
    <property type="entry name" value="CARBOXYPEPT_ZN_1"/>
    <property type="match status" value="1"/>
</dbReference>
<dbReference type="PROSITE" id="PS52035">
    <property type="entry name" value="PEPTIDASE_M14"/>
    <property type="match status" value="1"/>
</dbReference>
<protein>
    <recommendedName>
        <fullName evidence="8">Carboxypeptidase O</fullName>
        <shortName evidence="8">CPO</shortName>
        <ecNumber evidence="6">3.4.17.-</ecNumber>
    </recommendedName>
</protein>